<dbReference type="EC" id="1.3.1.98" evidence="1"/>
<dbReference type="EMBL" id="CP001391">
    <property type="protein sequence ID" value="ACN95164.1"/>
    <property type="molecule type" value="Genomic_DNA"/>
</dbReference>
<dbReference type="RefSeq" id="WP_006280574.1">
    <property type="nucleotide sequence ID" value="NZ_MKIF01000166.1"/>
</dbReference>
<dbReference type="SMR" id="C0R2M2"/>
<dbReference type="STRING" id="66084.WRi_003550"/>
<dbReference type="KEGG" id="wri:WRi_003550"/>
<dbReference type="HOGENOM" id="CLU_035304_1_0_5"/>
<dbReference type="UniPathway" id="UPA00219"/>
<dbReference type="Proteomes" id="UP000001293">
    <property type="component" value="Chromosome"/>
</dbReference>
<dbReference type="GO" id="GO:0005829">
    <property type="term" value="C:cytosol"/>
    <property type="evidence" value="ECO:0007669"/>
    <property type="project" value="TreeGrafter"/>
</dbReference>
<dbReference type="GO" id="GO:0071949">
    <property type="term" value="F:FAD binding"/>
    <property type="evidence" value="ECO:0007669"/>
    <property type="project" value="InterPro"/>
</dbReference>
<dbReference type="GO" id="GO:0008762">
    <property type="term" value="F:UDP-N-acetylmuramate dehydrogenase activity"/>
    <property type="evidence" value="ECO:0007669"/>
    <property type="project" value="UniProtKB-UniRule"/>
</dbReference>
<dbReference type="GO" id="GO:0051301">
    <property type="term" value="P:cell division"/>
    <property type="evidence" value="ECO:0007669"/>
    <property type="project" value="UniProtKB-KW"/>
</dbReference>
<dbReference type="GO" id="GO:0071555">
    <property type="term" value="P:cell wall organization"/>
    <property type="evidence" value="ECO:0007669"/>
    <property type="project" value="UniProtKB-KW"/>
</dbReference>
<dbReference type="GO" id="GO:0009252">
    <property type="term" value="P:peptidoglycan biosynthetic process"/>
    <property type="evidence" value="ECO:0007669"/>
    <property type="project" value="UniProtKB-UniRule"/>
</dbReference>
<dbReference type="GO" id="GO:0008360">
    <property type="term" value="P:regulation of cell shape"/>
    <property type="evidence" value="ECO:0007669"/>
    <property type="project" value="UniProtKB-KW"/>
</dbReference>
<dbReference type="Gene3D" id="3.30.465.10">
    <property type="match status" value="1"/>
</dbReference>
<dbReference type="Gene3D" id="3.90.78.10">
    <property type="entry name" value="UDP-N-acetylenolpyruvoylglucosamine reductase, C-terminal domain"/>
    <property type="match status" value="1"/>
</dbReference>
<dbReference type="Gene3D" id="3.30.43.10">
    <property type="entry name" value="Uridine Diphospho-n-acetylenolpyruvylglucosamine Reductase, domain 2"/>
    <property type="match status" value="1"/>
</dbReference>
<dbReference type="HAMAP" id="MF_00037">
    <property type="entry name" value="MurB"/>
    <property type="match status" value="1"/>
</dbReference>
<dbReference type="InterPro" id="IPR016166">
    <property type="entry name" value="FAD-bd_PCMH"/>
</dbReference>
<dbReference type="InterPro" id="IPR036318">
    <property type="entry name" value="FAD-bd_PCMH-like_sf"/>
</dbReference>
<dbReference type="InterPro" id="IPR016167">
    <property type="entry name" value="FAD-bd_PCMH_sub1"/>
</dbReference>
<dbReference type="InterPro" id="IPR016169">
    <property type="entry name" value="FAD-bd_PCMH_sub2"/>
</dbReference>
<dbReference type="InterPro" id="IPR003170">
    <property type="entry name" value="MurB"/>
</dbReference>
<dbReference type="InterPro" id="IPR011601">
    <property type="entry name" value="MurB_C"/>
</dbReference>
<dbReference type="InterPro" id="IPR036635">
    <property type="entry name" value="MurB_C_sf"/>
</dbReference>
<dbReference type="InterPro" id="IPR006094">
    <property type="entry name" value="Oxid_FAD_bind_N"/>
</dbReference>
<dbReference type="NCBIfam" id="TIGR00179">
    <property type="entry name" value="murB"/>
    <property type="match status" value="1"/>
</dbReference>
<dbReference type="NCBIfam" id="NF010480">
    <property type="entry name" value="PRK13905.1"/>
    <property type="match status" value="1"/>
</dbReference>
<dbReference type="PANTHER" id="PTHR21071">
    <property type="entry name" value="UDP-N-ACETYLENOLPYRUVOYLGLUCOSAMINE REDUCTASE"/>
    <property type="match status" value="1"/>
</dbReference>
<dbReference type="PANTHER" id="PTHR21071:SF4">
    <property type="entry name" value="UDP-N-ACETYLENOLPYRUVOYLGLUCOSAMINE REDUCTASE"/>
    <property type="match status" value="1"/>
</dbReference>
<dbReference type="Pfam" id="PF01565">
    <property type="entry name" value="FAD_binding_4"/>
    <property type="match status" value="1"/>
</dbReference>
<dbReference type="Pfam" id="PF02873">
    <property type="entry name" value="MurB_C"/>
    <property type="match status" value="1"/>
</dbReference>
<dbReference type="SUPFAM" id="SSF56176">
    <property type="entry name" value="FAD-binding/transporter-associated domain-like"/>
    <property type="match status" value="1"/>
</dbReference>
<dbReference type="SUPFAM" id="SSF56194">
    <property type="entry name" value="Uridine diphospho-N-Acetylenolpyruvylglucosamine reductase, MurB, C-terminal domain"/>
    <property type="match status" value="1"/>
</dbReference>
<dbReference type="PROSITE" id="PS51387">
    <property type="entry name" value="FAD_PCMH"/>
    <property type="match status" value="1"/>
</dbReference>
<protein>
    <recommendedName>
        <fullName evidence="1">UDP-N-acetylenolpyruvoylglucosamine reductase</fullName>
        <ecNumber evidence="1">1.3.1.98</ecNumber>
    </recommendedName>
    <alternativeName>
        <fullName evidence="1">UDP-N-acetylmuramate dehydrogenase</fullName>
    </alternativeName>
</protein>
<accession>C0R2M2</accession>
<sequence length="295" mass="32462">MLISLPKVRGIYRYDILMSKATWLNVGGRADILFKPRDIEDLTCLIKNTELPVSVIGATSNIIVRDSGIRGITVKLGKEFAYIKSKGNNSIVAGGAVLLSNLAHFAGNQQISGLEFLVGIPGTVGGGIEMNAGAYGSDIASVVQSIKAVNLEDGNLYEFSSEEMGYFYRGHSLKGNWIFVEAEFKGVNSEYELILQRLKEVIERKNKSQPIRGKTAGCIFKNPKNYRAWELIDKSGCLGLNIGGARISKKHCNFLLNYDNATASDLENLGNKVKDAVKDKFNVELEWEIRVLGSY</sequence>
<proteinExistence type="inferred from homology"/>
<name>MURB_WOLWR</name>
<reference key="1">
    <citation type="journal article" date="2009" name="Proc. Natl. Acad. Sci. U.S.A.">
        <title>The mosaic genome structure of the Wolbachia wRi strain infecting Drosophila simulans.</title>
        <authorList>
            <person name="Klasson L."/>
            <person name="Westberg J."/>
            <person name="Sapountzis P."/>
            <person name="Naeslund K."/>
            <person name="Lutnaes Y."/>
            <person name="Darby A.C."/>
            <person name="Veneti Z."/>
            <person name="Chen L."/>
            <person name="Braig H.R."/>
            <person name="Garrett R."/>
            <person name="Bourtzis K."/>
            <person name="Andersson S.G."/>
        </authorList>
    </citation>
    <scope>NUCLEOTIDE SEQUENCE [LARGE SCALE GENOMIC DNA]</scope>
    <source>
        <strain>wRi</strain>
    </source>
</reference>
<keyword id="KW-0131">Cell cycle</keyword>
<keyword id="KW-0132">Cell division</keyword>
<keyword id="KW-0133">Cell shape</keyword>
<keyword id="KW-0961">Cell wall biogenesis/degradation</keyword>
<keyword id="KW-0963">Cytoplasm</keyword>
<keyword id="KW-0274">FAD</keyword>
<keyword id="KW-0285">Flavoprotein</keyword>
<keyword id="KW-0521">NADP</keyword>
<keyword id="KW-0560">Oxidoreductase</keyword>
<keyword id="KW-0573">Peptidoglycan synthesis</keyword>
<gene>
    <name evidence="1" type="primary">murB</name>
    <name type="ordered locus">WRi_003550</name>
</gene>
<organism>
    <name type="scientific">Wolbachia sp. subsp. Drosophila simulans (strain wRi)</name>
    <dbReference type="NCBI Taxonomy" id="66084"/>
    <lineage>
        <taxon>Bacteria</taxon>
        <taxon>Pseudomonadati</taxon>
        <taxon>Pseudomonadota</taxon>
        <taxon>Alphaproteobacteria</taxon>
        <taxon>Rickettsiales</taxon>
        <taxon>Anaplasmataceae</taxon>
        <taxon>Wolbachieae</taxon>
        <taxon>Wolbachia</taxon>
    </lineage>
</organism>
<evidence type="ECO:0000255" key="1">
    <source>
        <dbReference type="HAMAP-Rule" id="MF_00037"/>
    </source>
</evidence>
<feature type="chain" id="PRO_1000117148" description="UDP-N-acetylenolpyruvoylglucosamine reductase">
    <location>
        <begin position="1"/>
        <end position="295"/>
    </location>
</feature>
<feature type="domain" description="FAD-binding PCMH-type" evidence="1">
    <location>
        <begin position="26"/>
        <end position="189"/>
    </location>
</feature>
<feature type="active site" evidence="1">
    <location>
        <position position="169"/>
    </location>
</feature>
<feature type="active site" description="Proton donor" evidence="1">
    <location>
        <position position="218"/>
    </location>
</feature>
<feature type="active site" evidence="1">
    <location>
        <position position="288"/>
    </location>
</feature>
<comment type="function">
    <text evidence="1">Cell wall formation.</text>
</comment>
<comment type="catalytic activity">
    <reaction evidence="1">
        <text>UDP-N-acetyl-alpha-D-muramate + NADP(+) = UDP-N-acetyl-3-O-(1-carboxyvinyl)-alpha-D-glucosamine + NADPH + H(+)</text>
        <dbReference type="Rhea" id="RHEA:12248"/>
        <dbReference type="ChEBI" id="CHEBI:15378"/>
        <dbReference type="ChEBI" id="CHEBI:57783"/>
        <dbReference type="ChEBI" id="CHEBI:58349"/>
        <dbReference type="ChEBI" id="CHEBI:68483"/>
        <dbReference type="ChEBI" id="CHEBI:70757"/>
        <dbReference type="EC" id="1.3.1.98"/>
    </reaction>
</comment>
<comment type="cofactor">
    <cofactor evidence="1">
        <name>FAD</name>
        <dbReference type="ChEBI" id="CHEBI:57692"/>
    </cofactor>
</comment>
<comment type="pathway">
    <text evidence="1">Cell wall biogenesis; peptidoglycan biosynthesis.</text>
</comment>
<comment type="subcellular location">
    <subcellularLocation>
        <location evidence="1">Cytoplasm</location>
    </subcellularLocation>
</comment>
<comment type="similarity">
    <text evidence="1">Belongs to the MurB family.</text>
</comment>